<sequence>YINYKNMSNQHTLLMSNLLPVGSNISTWWNFGSMLLICLMLQTLTGFFLAIHYTANINLAFSSVVHITRDVPYGWTMQNLHAISASLFFICIYIHIARGLYYGLYMNKEVWLSGVTLLFTLMATAFFGYVLPWGQMSFWAATVITNLLTAIPYLGTMLTTWLWGGFSXNDPTLTRFFALHFILPFIIISLSSAHIMLLHAEGSNNPLGTNSDID</sequence>
<comment type="function">
    <text evidence="2">Component of the ubiquinol-cytochrome c reductase complex (complex III or cytochrome b-c1 complex) that is part of the mitochondrial respiratory chain. The b-c1 complex mediates electron transfer from ubiquinol to cytochrome c. Contributes to the generation of a proton gradient across the mitochondrial membrane that is then used for ATP synthesis.</text>
</comment>
<comment type="cofactor">
    <cofactor evidence="2">
        <name>heme b</name>
        <dbReference type="ChEBI" id="CHEBI:60344"/>
    </cofactor>
    <text evidence="2">Binds 2 heme b groups non-covalently.</text>
</comment>
<comment type="subunit">
    <text evidence="2">The cytochrome bc1 complex contains 3 respiratory subunits (MT-CYB, CYC1 and UQCRFS1), 2 core proteins (UQCRC1 and UQCRC2) and probably 6 low-molecular weight proteins.</text>
</comment>
<comment type="subcellular location">
    <subcellularLocation>
        <location evidence="2">Mitochondrion inner membrane</location>
        <topology evidence="2">Multi-pass membrane protein</topology>
    </subcellularLocation>
</comment>
<comment type="miscellaneous">
    <text evidence="1">Heme 1 (or BL or b562) is low-potential and absorbs at about 562 nm, and heme 2 (or BH or b566) is high-potential and absorbs at about 566 nm.</text>
</comment>
<comment type="similarity">
    <text evidence="3">Belongs to the cytochrome b family.</text>
</comment>
<comment type="caution">
    <text evidence="2">The full-length protein contains only eight transmembrane helices, not nine as predicted by bioinformatics tools.</text>
</comment>
<accession>P87416</accession>
<proteinExistence type="inferred from homology"/>
<organism>
    <name type="scientific">Elapsoidea semiannulata</name>
    <name type="common">Angolan garter snake</name>
    <dbReference type="NCBI Taxonomy" id="55266"/>
    <lineage>
        <taxon>Eukaryota</taxon>
        <taxon>Metazoa</taxon>
        <taxon>Chordata</taxon>
        <taxon>Craniata</taxon>
        <taxon>Vertebrata</taxon>
        <taxon>Euteleostomi</taxon>
        <taxon>Lepidosauria</taxon>
        <taxon>Squamata</taxon>
        <taxon>Bifurcata</taxon>
        <taxon>Unidentata</taxon>
        <taxon>Episquamata</taxon>
        <taxon>Toxicofera</taxon>
        <taxon>Serpentes</taxon>
        <taxon>Colubroidea</taxon>
        <taxon>Elapidae</taxon>
        <taxon>Elapinae</taxon>
        <taxon>Elapsoidea</taxon>
    </lineage>
</organism>
<geneLocation type="mitochondrion"/>
<feature type="chain" id="PRO_0000060909" description="Cytochrome b">
    <location>
        <begin position="1" status="less than"/>
        <end position="214" status="greater than"/>
    </location>
</feature>
<feature type="transmembrane region" description="Helical" evidence="3">
    <location>
        <begin position="31"/>
        <end position="51"/>
    </location>
</feature>
<feature type="transmembrane region" description="Helical" evidence="2">
    <location>
        <begin position="75"/>
        <end position="96"/>
    </location>
</feature>
<feature type="transmembrane region" description="Helical" evidence="2">
    <location>
        <begin position="111"/>
        <end position="131"/>
    </location>
</feature>
<feature type="transmembrane region" description="Helical" evidence="3">
    <location>
        <begin position="176"/>
        <end position="196"/>
    </location>
</feature>
<feature type="binding site" description="axial binding residue" evidence="2">
    <location>
        <position position="81"/>
    </location>
    <ligand>
        <name>heme b</name>
        <dbReference type="ChEBI" id="CHEBI:60344"/>
        <label>b562</label>
    </ligand>
    <ligandPart>
        <name>Fe</name>
        <dbReference type="ChEBI" id="CHEBI:18248"/>
    </ligandPart>
</feature>
<feature type="binding site" description="axial binding residue" evidence="2">
    <location>
        <position position="95"/>
    </location>
    <ligand>
        <name>heme b</name>
        <dbReference type="ChEBI" id="CHEBI:60344"/>
        <label>b566</label>
    </ligand>
    <ligandPart>
        <name>Fe</name>
        <dbReference type="ChEBI" id="CHEBI:18248"/>
    </ligandPart>
</feature>
<feature type="binding site" description="axial binding residue" evidence="2">
    <location>
        <position position="180"/>
    </location>
    <ligand>
        <name>heme b</name>
        <dbReference type="ChEBI" id="CHEBI:60344"/>
        <label>b562</label>
    </ligand>
    <ligandPart>
        <name>Fe</name>
        <dbReference type="ChEBI" id="CHEBI:18248"/>
    </ligandPart>
</feature>
<feature type="binding site" description="axial binding residue" evidence="2">
    <location>
        <position position="194"/>
    </location>
    <ligand>
        <name>heme b</name>
        <dbReference type="ChEBI" id="CHEBI:60344"/>
        <label>b566</label>
    </ligand>
    <ligandPart>
        <name>Fe</name>
        <dbReference type="ChEBI" id="CHEBI:18248"/>
    </ligandPart>
</feature>
<feature type="binding site" evidence="2">
    <location>
        <position position="199"/>
    </location>
    <ligand>
        <name>a ubiquinone</name>
        <dbReference type="ChEBI" id="CHEBI:16389"/>
    </ligand>
</feature>
<feature type="non-terminal residue">
    <location>
        <position position="1"/>
    </location>
</feature>
<feature type="non-terminal residue">
    <location>
        <position position="214"/>
    </location>
</feature>
<gene>
    <name type="primary">MT-CYB</name>
    <name type="synonym">COB</name>
    <name type="synonym">CYTB</name>
    <name type="synonym">MTCYB</name>
</gene>
<protein>
    <recommendedName>
        <fullName>Cytochrome b</fullName>
    </recommendedName>
    <alternativeName>
        <fullName>Complex III subunit 3</fullName>
    </alternativeName>
    <alternativeName>
        <fullName>Complex III subunit III</fullName>
    </alternativeName>
    <alternativeName>
        <fullName>Cytochrome b-c1 complex subunit 3</fullName>
    </alternativeName>
    <alternativeName>
        <fullName>Ubiquinol-cytochrome-c reductase complex cytochrome b subunit</fullName>
    </alternativeName>
</protein>
<evidence type="ECO:0000250" key="1"/>
<evidence type="ECO:0000250" key="2">
    <source>
        <dbReference type="UniProtKB" id="P00157"/>
    </source>
</evidence>
<evidence type="ECO:0000255" key="3">
    <source>
        <dbReference type="PROSITE-ProRule" id="PRU00968"/>
    </source>
</evidence>
<keyword id="KW-0249">Electron transport</keyword>
<keyword id="KW-0349">Heme</keyword>
<keyword id="KW-0408">Iron</keyword>
<keyword id="KW-0472">Membrane</keyword>
<keyword id="KW-0479">Metal-binding</keyword>
<keyword id="KW-0496">Mitochondrion</keyword>
<keyword id="KW-0999">Mitochondrion inner membrane</keyword>
<keyword id="KW-0679">Respiratory chain</keyword>
<keyword id="KW-0812">Transmembrane</keyword>
<keyword id="KW-1133">Transmembrane helix</keyword>
<keyword id="KW-0813">Transport</keyword>
<keyword id="KW-0830">Ubiquinone</keyword>
<dbReference type="EMBL" id="AF039260">
    <property type="protein sequence ID" value="AAC33537.1"/>
    <property type="molecule type" value="Genomic_DNA"/>
</dbReference>
<dbReference type="GO" id="GO:0005743">
    <property type="term" value="C:mitochondrial inner membrane"/>
    <property type="evidence" value="ECO:0007669"/>
    <property type="project" value="UniProtKB-SubCell"/>
</dbReference>
<dbReference type="GO" id="GO:0046872">
    <property type="term" value="F:metal ion binding"/>
    <property type="evidence" value="ECO:0007669"/>
    <property type="project" value="UniProtKB-KW"/>
</dbReference>
<dbReference type="GO" id="GO:0008121">
    <property type="term" value="F:ubiquinol-cytochrome-c reductase activity"/>
    <property type="evidence" value="ECO:0007669"/>
    <property type="project" value="TreeGrafter"/>
</dbReference>
<dbReference type="GO" id="GO:0006122">
    <property type="term" value="P:mitochondrial electron transport, ubiquinol to cytochrome c"/>
    <property type="evidence" value="ECO:0007669"/>
    <property type="project" value="TreeGrafter"/>
</dbReference>
<dbReference type="CDD" id="cd00284">
    <property type="entry name" value="Cytochrome_b_N"/>
    <property type="match status" value="1"/>
</dbReference>
<dbReference type="Gene3D" id="1.20.810.10">
    <property type="entry name" value="Cytochrome Bc1 Complex, Chain C"/>
    <property type="match status" value="1"/>
</dbReference>
<dbReference type="InterPro" id="IPR005797">
    <property type="entry name" value="Cyt_b/b6_N"/>
</dbReference>
<dbReference type="InterPro" id="IPR027387">
    <property type="entry name" value="Cytb/b6-like_sf"/>
</dbReference>
<dbReference type="InterPro" id="IPR048259">
    <property type="entry name" value="Cytochrome_b_N_euk/bac"/>
</dbReference>
<dbReference type="InterPro" id="IPR016174">
    <property type="entry name" value="Di-haem_cyt_TM"/>
</dbReference>
<dbReference type="PANTHER" id="PTHR19271">
    <property type="entry name" value="CYTOCHROME B"/>
    <property type="match status" value="1"/>
</dbReference>
<dbReference type="PANTHER" id="PTHR19271:SF16">
    <property type="entry name" value="CYTOCHROME B"/>
    <property type="match status" value="1"/>
</dbReference>
<dbReference type="Pfam" id="PF00033">
    <property type="entry name" value="Cytochrome_B"/>
    <property type="match status" value="1"/>
</dbReference>
<dbReference type="SUPFAM" id="SSF81342">
    <property type="entry name" value="Transmembrane di-heme cytochromes"/>
    <property type="match status" value="1"/>
</dbReference>
<dbReference type="PROSITE" id="PS51002">
    <property type="entry name" value="CYTB_NTER"/>
    <property type="match status" value="1"/>
</dbReference>
<reference key="1">
    <citation type="journal article" date="1998" name="Mol. Phylogenet. Evol.">
        <title>Weighting and congruence: a case study based on three mitochondrial genes in pitvipers.</title>
        <authorList>
            <person name="Vidal N."/>
            <person name="Lecointre G."/>
        </authorList>
    </citation>
    <scope>NUCLEOTIDE SEQUENCE [GENOMIC DNA]</scope>
</reference>
<reference key="2">
    <citation type="journal article" date="1997" name="C. R. Acad. Sci. III, Sci. Vie">
        <title>Molecular systematics of pitvipers: paraphyly of the Bothrops complex.</title>
        <authorList>
            <person name="Vidal N."/>
            <person name="Lecointre G."/>
            <person name="Vie J.-C."/>
            <person name="Gasc J.-P."/>
        </authorList>
    </citation>
    <scope>NUCLEOTIDE SEQUENCE [GENOMIC DNA] OF 1-132</scope>
</reference>
<name>CYB_ELASE</name>